<evidence type="ECO:0000255" key="1">
    <source>
        <dbReference type="HAMAP-Rule" id="MF_01013"/>
    </source>
</evidence>
<name>HIS6_STAAB</name>
<sequence>MIKKRIIPCLDVKDGRVVKGIQFKGLRDIGNPVDLAMYYNEAGADELVFLDISKTEEGHSLMLEVIEQTASRLFIPLTVGGGIQSLDDITQLLNHGADKVSLNSSALKNPQLIKQASDKFGRQCICIAIDSYYDPERKAHYCCTHGGKKMTNIKVYDWVQQVEQLGAGELLVTSMGHDGMKQGFDIEHLAKIKSLVNIPIIASGGGGNAQHFVELFDQTDVSAGLAASILHDRETTVQSIKEVIRQGGIAVR</sequence>
<reference key="1">
    <citation type="journal article" date="2007" name="PLoS ONE">
        <title>Molecular correlates of host specialization in Staphylococcus aureus.</title>
        <authorList>
            <person name="Herron-Olson L."/>
            <person name="Fitzgerald J.R."/>
            <person name="Musser J.M."/>
            <person name="Kapur V."/>
        </authorList>
    </citation>
    <scope>NUCLEOTIDE SEQUENCE [LARGE SCALE GENOMIC DNA]</scope>
    <source>
        <strain>bovine RF122 / ET3-1</strain>
    </source>
</reference>
<dbReference type="EC" id="4.3.2.10" evidence="1"/>
<dbReference type="EMBL" id="AJ938182">
    <property type="protein sequence ID" value="CAI82237.1"/>
    <property type="molecule type" value="Genomic_DNA"/>
</dbReference>
<dbReference type="SMR" id="Q2YZ71"/>
<dbReference type="KEGG" id="sab:SAB2549c"/>
<dbReference type="HOGENOM" id="CLU_048577_4_0_9"/>
<dbReference type="UniPathway" id="UPA00031">
    <property type="reaction ID" value="UER00010"/>
</dbReference>
<dbReference type="GO" id="GO:0005737">
    <property type="term" value="C:cytoplasm"/>
    <property type="evidence" value="ECO:0007669"/>
    <property type="project" value="UniProtKB-SubCell"/>
</dbReference>
<dbReference type="GO" id="GO:0000107">
    <property type="term" value="F:imidazoleglycerol-phosphate synthase activity"/>
    <property type="evidence" value="ECO:0007669"/>
    <property type="project" value="UniProtKB-UniRule"/>
</dbReference>
<dbReference type="GO" id="GO:0016829">
    <property type="term" value="F:lyase activity"/>
    <property type="evidence" value="ECO:0007669"/>
    <property type="project" value="UniProtKB-KW"/>
</dbReference>
<dbReference type="GO" id="GO:0000105">
    <property type="term" value="P:L-histidine biosynthetic process"/>
    <property type="evidence" value="ECO:0007669"/>
    <property type="project" value="UniProtKB-UniRule"/>
</dbReference>
<dbReference type="CDD" id="cd04731">
    <property type="entry name" value="HisF"/>
    <property type="match status" value="1"/>
</dbReference>
<dbReference type="FunFam" id="3.20.20.70:FF:000462">
    <property type="entry name" value="Multifunctional fusion protein"/>
    <property type="match status" value="1"/>
</dbReference>
<dbReference type="Gene3D" id="3.20.20.70">
    <property type="entry name" value="Aldolase class I"/>
    <property type="match status" value="1"/>
</dbReference>
<dbReference type="HAMAP" id="MF_01013">
    <property type="entry name" value="HisF"/>
    <property type="match status" value="1"/>
</dbReference>
<dbReference type="InterPro" id="IPR013785">
    <property type="entry name" value="Aldolase_TIM"/>
</dbReference>
<dbReference type="InterPro" id="IPR006062">
    <property type="entry name" value="His_biosynth"/>
</dbReference>
<dbReference type="InterPro" id="IPR004651">
    <property type="entry name" value="HisF"/>
</dbReference>
<dbReference type="InterPro" id="IPR050064">
    <property type="entry name" value="IGPS_HisA/HisF"/>
</dbReference>
<dbReference type="InterPro" id="IPR011060">
    <property type="entry name" value="RibuloseP-bd_barrel"/>
</dbReference>
<dbReference type="NCBIfam" id="TIGR00735">
    <property type="entry name" value="hisF"/>
    <property type="match status" value="1"/>
</dbReference>
<dbReference type="PANTHER" id="PTHR21235:SF2">
    <property type="entry name" value="IMIDAZOLE GLYCEROL PHOSPHATE SYNTHASE HISHF"/>
    <property type="match status" value="1"/>
</dbReference>
<dbReference type="PANTHER" id="PTHR21235">
    <property type="entry name" value="IMIDAZOLE GLYCEROL PHOSPHATE SYNTHASE SUBUNIT HISF/H IGP SYNTHASE SUBUNIT HISF/H"/>
    <property type="match status" value="1"/>
</dbReference>
<dbReference type="Pfam" id="PF00977">
    <property type="entry name" value="His_biosynth"/>
    <property type="match status" value="1"/>
</dbReference>
<dbReference type="SUPFAM" id="SSF51366">
    <property type="entry name" value="Ribulose-phoshate binding barrel"/>
    <property type="match status" value="1"/>
</dbReference>
<gene>
    <name evidence="1" type="primary">hisF</name>
    <name type="ordered locus">SAB2549c</name>
</gene>
<comment type="function">
    <text evidence="1">IGPS catalyzes the conversion of PRFAR and glutamine to IGP, AICAR and glutamate. The HisF subunit catalyzes the cyclization activity that produces IGP and AICAR from PRFAR using the ammonia provided by the HisH subunit.</text>
</comment>
<comment type="catalytic activity">
    <reaction evidence="1">
        <text>5-[(5-phospho-1-deoxy-D-ribulos-1-ylimino)methylamino]-1-(5-phospho-beta-D-ribosyl)imidazole-4-carboxamide + L-glutamine = D-erythro-1-(imidazol-4-yl)glycerol 3-phosphate + 5-amino-1-(5-phospho-beta-D-ribosyl)imidazole-4-carboxamide + L-glutamate + H(+)</text>
        <dbReference type="Rhea" id="RHEA:24793"/>
        <dbReference type="ChEBI" id="CHEBI:15378"/>
        <dbReference type="ChEBI" id="CHEBI:29985"/>
        <dbReference type="ChEBI" id="CHEBI:58278"/>
        <dbReference type="ChEBI" id="CHEBI:58359"/>
        <dbReference type="ChEBI" id="CHEBI:58475"/>
        <dbReference type="ChEBI" id="CHEBI:58525"/>
        <dbReference type="EC" id="4.3.2.10"/>
    </reaction>
</comment>
<comment type="pathway">
    <text evidence="1">Amino-acid biosynthesis; L-histidine biosynthesis; L-histidine from 5-phospho-alpha-D-ribose 1-diphosphate: step 5/9.</text>
</comment>
<comment type="subunit">
    <text evidence="1">Heterodimer of HisH and HisF.</text>
</comment>
<comment type="subcellular location">
    <subcellularLocation>
        <location evidence="1">Cytoplasm</location>
    </subcellularLocation>
</comment>
<comment type="similarity">
    <text evidence="1">Belongs to the HisA/HisF family.</text>
</comment>
<organism>
    <name type="scientific">Staphylococcus aureus (strain bovine RF122 / ET3-1)</name>
    <dbReference type="NCBI Taxonomy" id="273036"/>
    <lineage>
        <taxon>Bacteria</taxon>
        <taxon>Bacillati</taxon>
        <taxon>Bacillota</taxon>
        <taxon>Bacilli</taxon>
        <taxon>Bacillales</taxon>
        <taxon>Staphylococcaceae</taxon>
        <taxon>Staphylococcus</taxon>
    </lineage>
</organism>
<keyword id="KW-0028">Amino-acid biosynthesis</keyword>
<keyword id="KW-0963">Cytoplasm</keyword>
<keyword id="KW-0368">Histidine biosynthesis</keyword>
<keyword id="KW-0456">Lyase</keyword>
<protein>
    <recommendedName>
        <fullName evidence="1">Imidazole glycerol phosphate synthase subunit HisF</fullName>
        <ecNumber evidence="1">4.3.2.10</ecNumber>
    </recommendedName>
    <alternativeName>
        <fullName evidence="1">IGP synthase cyclase subunit</fullName>
    </alternativeName>
    <alternativeName>
        <fullName evidence="1">IGP synthase subunit HisF</fullName>
    </alternativeName>
    <alternativeName>
        <fullName evidence="1">ImGP synthase subunit HisF</fullName>
        <shortName evidence="1">IGPS subunit HisF</shortName>
    </alternativeName>
</protein>
<proteinExistence type="inferred from homology"/>
<accession>Q2YZ71</accession>
<feature type="chain" id="PRO_0000230135" description="Imidazole glycerol phosphate synthase subunit HisF">
    <location>
        <begin position="1"/>
        <end position="252"/>
    </location>
</feature>
<feature type="active site" evidence="1">
    <location>
        <position position="11"/>
    </location>
</feature>
<feature type="active site" evidence="1">
    <location>
        <position position="130"/>
    </location>
</feature>